<name>YCCT_SHIDS</name>
<comment type="similarity">
    <text evidence="1">Belongs to the UPF0319 family.</text>
</comment>
<gene>
    <name evidence="1" type="primary">yccT</name>
    <name type="ordered locus">SDY_0939</name>
</gene>
<keyword id="KW-1185">Reference proteome</keyword>
<keyword id="KW-0732">Signal</keyword>
<reference key="1">
    <citation type="journal article" date="2005" name="Nucleic Acids Res.">
        <title>Genome dynamics and diversity of Shigella species, the etiologic agents of bacillary dysentery.</title>
        <authorList>
            <person name="Yang F."/>
            <person name="Yang J."/>
            <person name="Zhang X."/>
            <person name="Chen L."/>
            <person name="Jiang Y."/>
            <person name="Yan Y."/>
            <person name="Tang X."/>
            <person name="Wang J."/>
            <person name="Xiong Z."/>
            <person name="Dong J."/>
            <person name="Xue Y."/>
            <person name="Zhu Y."/>
            <person name="Xu X."/>
            <person name="Sun L."/>
            <person name="Chen S."/>
            <person name="Nie H."/>
            <person name="Peng J."/>
            <person name="Xu J."/>
            <person name="Wang Y."/>
            <person name="Yuan Z."/>
            <person name="Wen Y."/>
            <person name="Yao Z."/>
            <person name="Shen Y."/>
            <person name="Qiang B."/>
            <person name="Hou Y."/>
            <person name="Yu J."/>
            <person name="Jin Q."/>
        </authorList>
    </citation>
    <scope>NUCLEOTIDE SEQUENCE [LARGE SCALE GENOMIC DNA]</scope>
    <source>
        <strain>Sd197</strain>
    </source>
</reference>
<protein>
    <recommendedName>
        <fullName evidence="1">UPF0319 protein YccT</fullName>
    </recommendedName>
</protein>
<organism>
    <name type="scientific">Shigella dysenteriae serotype 1 (strain Sd197)</name>
    <dbReference type="NCBI Taxonomy" id="300267"/>
    <lineage>
        <taxon>Bacteria</taxon>
        <taxon>Pseudomonadati</taxon>
        <taxon>Pseudomonadota</taxon>
        <taxon>Gammaproteobacteria</taxon>
        <taxon>Enterobacterales</taxon>
        <taxon>Enterobacteriaceae</taxon>
        <taxon>Shigella</taxon>
    </lineage>
</organism>
<evidence type="ECO:0000255" key="1">
    <source>
        <dbReference type="HAMAP-Rule" id="MF_00789"/>
    </source>
</evidence>
<proteinExistence type="inferred from homology"/>
<feature type="signal peptide" evidence="1">
    <location>
        <begin position="1"/>
        <end position="20"/>
    </location>
</feature>
<feature type="chain" id="PRO_1000046908" description="UPF0319 protein YccT">
    <location>
        <begin position="21"/>
        <end position="220"/>
    </location>
</feature>
<dbReference type="EMBL" id="CP000034">
    <property type="protein sequence ID" value="ABB61113.1"/>
    <property type="molecule type" value="Genomic_DNA"/>
</dbReference>
<dbReference type="RefSeq" id="WP_000847791.1">
    <property type="nucleotide sequence ID" value="NC_007606.1"/>
</dbReference>
<dbReference type="RefSeq" id="YP_402604.1">
    <property type="nucleotide sequence ID" value="NC_007606.1"/>
</dbReference>
<dbReference type="STRING" id="300267.SDY_0939"/>
<dbReference type="EnsemblBacteria" id="ABB61113">
    <property type="protein sequence ID" value="ABB61113"/>
    <property type="gene ID" value="SDY_0939"/>
</dbReference>
<dbReference type="KEGG" id="sdy:SDY_0939"/>
<dbReference type="PATRIC" id="fig|300267.13.peg.1087"/>
<dbReference type="HOGENOM" id="CLU_073782_2_0_6"/>
<dbReference type="Proteomes" id="UP000002716">
    <property type="component" value="Chromosome"/>
</dbReference>
<dbReference type="HAMAP" id="MF_00789">
    <property type="entry name" value="UPF0319"/>
    <property type="match status" value="1"/>
</dbReference>
<dbReference type="InterPro" id="IPR018635">
    <property type="entry name" value="UPF0319"/>
</dbReference>
<dbReference type="NCBIfam" id="NF047712">
    <property type="entry name" value="CrliSynInhib"/>
    <property type="match status" value="1"/>
</dbReference>
<dbReference type="NCBIfam" id="NF002967">
    <property type="entry name" value="PRK03641.1"/>
    <property type="match status" value="1"/>
</dbReference>
<dbReference type="PANTHER" id="PTHR38108">
    <property type="entry name" value="UPF0319 PROTEIN YCCT"/>
    <property type="match status" value="1"/>
</dbReference>
<dbReference type="PANTHER" id="PTHR38108:SF1">
    <property type="entry name" value="UPF0319 PROTEIN YCCT"/>
    <property type="match status" value="1"/>
</dbReference>
<dbReference type="Pfam" id="PF09829">
    <property type="entry name" value="DUF2057"/>
    <property type="match status" value="1"/>
</dbReference>
<accession>Q32HU2</accession>
<sequence>MKTGIVTTLIALCLPVSVFATTLRLSTDVDLLVLDGKKVSSSLLRGADSIELDNGPHQLVFRVEKTIHLSNSEERLYISPPLVVSFNTQLINQVNFRLPRLENEREANHFDAAPRLELLDGDATPIPVKLDILAITSTAKTIDYEVEVERYNKSAKRASLPQFATMMADDSTLLSGVSELDAIPPQSQVLTEQRLKYWFKLADPQTRNTFLQWAEKQPSS</sequence>